<geneLocation type="chloroplast"/>
<gene>
    <name type="primary">rps8</name>
</gene>
<comment type="function">
    <text evidence="1">One of the primary rRNA binding proteins, it binds directly to 16S rRNA central domain where it helps coordinate assembly of the platform of the 30S subunit.</text>
</comment>
<comment type="subunit">
    <text evidence="1">Part of the 30S ribosomal subunit.</text>
</comment>
<comment type="subcellular location">
    <subcellularLocation>
        <location>Plastid</location>
        <location>Chloroplast</location>
    </subcellularLocation>
</comment>
<comment type="similarity">
    <text evidence="2">Belongs to the universal ribosomal protein uS8 family.</text>
</comment>
<reference key="1">
    <citation type="journal article" date="2007" name="Theor. Appl. Genet.">
        <title>Complete chloroplast genome sequences of Hordeum vulgare, Sorghum bicolor and Agrostis stolonifera, and comparative analyses with other grass genomes.</title>
        <authorList>
            <person name="Saski C."/>
            <person name="Lee S.-B."/>
            <person name="Fjellheim S."/>
            <person name="Guda C."/>
            <person name="Jansen R.K."/>
            <person name="Luo H."/>
            <person name="Tomkins J."/>
            <person name="Rognli O.A."/>
            <person name="Daniell H."/>
            <person name="Clarke J.L."/>
        </authorList>
    </citation>
    <scope>NUCLEOTIDE SEQUENCE [LARGE SCALE GENOMIC DNA]</scope>
    <source>
        <strain>cv. Penn A-4</strain>
    </source>
</reference>
<keyword id="KW-0150">Chloroplast</keyword>
<keyword id="KW-0934">Plastid</keyword>
<keyword id="KW-0687">Ribonucleoprotein</keyword>
<keyword id="KW-0689">Ribosomal protein</keyword>
<keyword id="KW-0694">RNA-binding</keyword>
<keyword id="KW-0699">rRNA-binding</keyword>
<name>RR8_AGRST</name>
<dbReference type="EMBL" id="EF115543">
    <property type="protein sequence ID" value="ABK79615.1"/>
    <property type="molecule type" value="Genomic_DNA"/>
</dbReference>
<dbReference type="RefSeq" id="YP_874772.1">
    <property type="nucleotide sequence ID" value="NC_008591.1"/>
</dbReference>
<dbReference type="SMR" id="A1EA44"/>
<dbReference type="GeneID" id="4524945"/>
<dbReference type="GO" id="GO:0009507">
    <property type="term" value="C:chloroplast"/>
    <property type="evidence" value="ECO:0007669"/>
    <property type="project" value="UniProtKB-SubCell"/>
</dbReference>
<dbReference type="GO" id="GO:1990904">
    <property type="term" value="C:ribonucleoprotein complex"/>
    <property type="evidence" value="ECO:0007669"/>
    <property type="project" value="UniProtKB-KW"/>
</dbReference>
<dbReference type="GO" id="GO:0005840">
    <property type="term" value="C:ribosome"/>
    <property type="evidence" value="ECO:0007669"/>
    <property type="project" value="UniProtKB-KW"/>
</dbReference>
<dbReference type="GO" id="GO:0019843">
    <property type="term" value="F:rRNA binding"/>
    <property type="evidence" value="ECO:0007669"/>
    <property type="project" value="UniProtKB-UniRule"/>
</dbReference>
<dbReference type="GO" id="GO:0003735">
    <property type="term" value="F:structural constituent of ribosome"/>
    <property type="evidence" value="ECO:0007669"/>
    <property type="project" value="InterPro"/>
</dbReference>
<dbReference type="GO" id="GO:0006412">
    <property type="term" value="P:translation"/>
    <property type="evidence" value="ECO:0007669"/>
    <property type="project" value="UniProtKB-UniRule"/>
</dbReference>
<dbReference type="FunFam" id="3.30.1490.10:FF:000001">
    <property type="entry name" value="30S ribosomal protein S8"/>
    <property type="match status" value="1"/>
</dbReference>
<dbReference type="FunFam" id="3.30.1370.30:FF:000004">
    <property type="entry name" value="30S ribosomal protein S8, chloroplastic"/>
    <property type="match status" value="1"/>
</dbReference>
<dbReference type="Gene3D" id="3.30.1370.30">
    <property type="match status" value="1"/>
</dbReference>
<dbReference type="Gene3D" id="3.30.1490.10">
    <property type="match status" value="1"/>
</dbReference>
<dbReference type="HAMAP" id="MF_01302_B">
    <property type="entry name" value="Ribosomal_uS8_B"/>
    <property type="match status" value="1"/>
</dbReference>
<dbReference type="InterPro" id="IPR000630">
    <property type="entry name" value="Ribosomal_uS8"/>
</dbReference>
<dbReference type="InterPro" id="IPR047863">
    <property type="entry name" value="Ribosomal_uS8_CS"/>
</dbReference>
<dbReference type="InterPro" id="IPR035987">
    <property type="entry name" value="Ribosomal_uS8_sf"/>
</dbReference>
<dbReference type="NCBIfam" id="NF001109">
    <property type="entry name" value="PRK00136.1"/>
    <property type="match status" value="1"/>
</dbReference>
<dbReference type="PANTHER" id="PTHR11758">
    <property type="entry name" value="40S RIBOSOMAL PROTEIN S15A"/>
    <property type="match status" value="1"/>
</dbReference>
<dbReference type="Pfam" id="PF00410">
    <property type="entry name" value="Ribosomal_S8"/>
    <property type="match status" value="1"/>
</dbReference>
<dbReference type="SUPFAM" id="SSF56047">
    <property type="entry name" value="Ribosomal protein S8"/>
    <property type="match status" value="1"/>
</dbReference>
<dbReference type="PROSITE" id="PS00053">
    <property type="entry name" value="RIBOSOMAL_S8"/>
    <property type="match status" value="1"/>
</dbReference>
<accession>A1EA44</accession>
<proteinExistence type="inferred from homology"/>
<protein>
    <recommendedName>
        <fullName evidence="2">Small ribosomal subunit protein uS8c</fullName>
    </recommendedName>
    <alternativeName>
        <fullName>30S ribosomal protein S8, chloroplastic</fullName>
    </alternativeName>
</protein>
<evidence type="ECO:0000250" key="1"/>
<evidence type="ECO:0000305" key="2"/>
<organism>
    <name type="scientific">Agrostis stolonifera</name>
    <name type="common">Creeping bentgrass</name>
    <dbReference type="NCBI Taxonomy" id="63632"/>
    <lineage>
        <taxon>Eukaryota</taxon>
        <taxon>Viridiplantae</taxon>
        <taxon>Streptophyta</taxon>
        <taxon>Embryophyta</taxon>
        <taxon>Tracheophyta</taxon>
        <taxon>Spermatophyta</taxon>
        <taxon>Magnoliopsida</taxon>
        <taxon>Liliopsida</taxon>
        <taxon>Poales</taxon>
        <taxon>Poaceae</taxon>
        <taxon>BOP clade</taxon>
        <taxon>Pooideae</taxon>
        <taxon>Poodae</taxon>
        <taxon>Poeae</taxon>
        <taxon>Poeae Chloroplast Group 1 (Aveneae type)</taxon>
        <taxon>Agrostidodinae</taxon>
        <taxon>Agrostidinae</taxon>
        <taxon>Agrostis</taxon>
    </lineage>
</organism>
<feature type="chain" id="PRO_0000276716" description="Small ribosomal subunit protein uS8c">
    <location>
        <begin position="1"/>
        <end position="136"/>
    </location>
</feature>
<sequence length="136" mass="15709">MGKDTIADLLTSIRNADMNKKGTVRVVSTNITENIVKILLREGFIESVRKHQERNRYFLVSTLRHQKRKTRKGIYRTRTFLKRISRPGLRIYTNYQGIPKVLGGMGIAILSTSRGIMTDREARLNRIGGEVLCYIW</sequence>